<proteinExistence type="inferred from homology"/>
<name>RBFA_LISW6</name>
<evidence type="ECO:0000255" key="1">
    <source>
        <dbReference type="HAMAP-Rule" id="MF_00003"/>
    </source>
</evidence>
<organism>
    <name type="scientific">Listeria welshimeri serovar 6b (strain ATCC 35897 / DSM 20650 / CCUG 15529 / CIP 8149 / NCTC 11857 / SLCC 5334 / V8)</name>
    <dbReference type="NCBI Taxonomy" id="386043"/>
    <lineage>
        <taxon>Bacteria</taxon>
        <taxon>Bacillati</taxon>
        <taxon>Bacillota</taxon>
        <taxon>Bacilli</taxon>
        <taxon>Bacillales</taxon>
        <taxon>Listeriaceae</taxon>
        <taxon>Listeria</taxon>
    </lineage>
</organism>
<reference key="1">
    <citation type="journal article" date="2006" name="J. Bacteriol.">
        <title>Whole-genome sequence of Listeria welshimeri reveals common steps in genome reduction with Listeria innocua as compared to Listeria monocytogenes.</title>
        <authorList>
            <person name="Hain T."/>
            <person name="Steinweg C."/>
            <person name="Kuenne C.T."/>
            <person name="Billion A."/>
            <person name="Ghai R."/>
            <person name="Chatterjee S.S."/>
            <person name="Domann E."/>
            <person name="Kaerst U."/>
            <person name="Goesmann A."/>
            <person name="Bekel T."/>
            <person name="Bartels D."/>
            <person name="Kaiser O."/>
            <person name="Meyer F."/>
            <person name="Puehler A."/>
            <person name="Weisshaar B."/>
            <person name="Wehland J."/>
            <person name="Liang C."/>
            <person name="Dandekar T."/>
            <person name="Lampidis R."/>
            <person name="Kreft J."/>
            <person name="Goebel W."/>
            <person name="Chakraborty T."/>
        </authorList>
    </citation>
    <scope>NUCLEOTIDE SEQUENCE [LARGE SCALE GENOMIC DNA]</scope>
    <source>
        <strain>ATCC 35897 / DSM 20650 / CCUG 15529 / CIP 8149 / NCTC 11857 / SLCC 5334 / V8</strain>
    </source>
</reference>
<gene>
    <name evidence="1" type="primary">rbfA</name>
    <name type="ordered locus">lwe1342</name>
</gene>
<keyword id="KW-0963">Cytoplasm</keyword>
<keyword id="KW-0690">Ribosome biogenesis</keyword>
<feature type="chain" id="PRO_1000000135" description="Ribosome-binding factor A">
    <location>
        <begin position="1"/>
        <end position="114"/>
    </location>
</feature>
<dbReference type="EMBL" id="AM263198">
    <property type="protein sequence ID" value="CAK20760.1"/>
    <property type="molecule type" value="Genomic_DNA"/>
</dbReference>
<dbReference type="RefSeq" id="WP_011702144.1">
    <property type="nucleotide sequence ID" value="NC_008555.1"/>
</dbReference>
<dbReference type="SMR" id="A0AIC8"/>
<dbReference type="STRING" id="386043.lwe1342"/>
<dbReference type="GeneID" id="61189219"/>
<dbReference type="KEGG" id="lwe:lwe1342"/>
<dbReference type="eggNOG" id="COG0858">
    <property type="taxonomic scope" value="Bacteria"/>
</dbReference>
<dbReference type="HOGENOM" id="CLU_089475_6_3_9"/>
<dbReference type="OrthoDB" id="307788at2"/>
<dbReference type="Proteomes" id="UP000000779">
    <property type="component" value="Chromosome"/>
</dbReference>
<dbReference type="GO" id="GO:0005829">
    <property type="term" value="C:cytosol"/>
    <property type="evidence" value="ECO:0007669"/>
    <property type="project" value="TreeGrafter"/>
</dbReference>
<dbReference type="GO" id="GO:0043024">
    <property type="term" value="F:ribosomal small subunit binding"/>
    <property type="evidence" value="ECO:0007669"/>
    <property type="project" value="TreeGrafter"/>
</dbReference>
<dbReference type="GO" id="GO:0030490">
    <property type="term" value="P:maturation of SSU-rRNA"/>
    <property type="evidence" value="ECO:0007669"/>
    <property type="project" value="UniProtKB-UniRule"/>
</dbReference>
<dbReference type="FunFam" id="3.30.300.20:FF:000009">
    <property type="entry name" value="Ribosome-binding factor A"/>
    <property type="match status" value="1"/>
</dbReference>
<dbReference type="Gene3D" id="3.30.300.20">
    <property type="match status" value="1"/>
</dbReference>
<dbReference type="HAMAP" id="MF_00003">
    <property type="entry name" value="RbfA"/>
    <property type="match status" value="1"/>
</dbReference>
<dbReference type="InterPro" id="IPR015946">
    <property type="entry name" value="KH_dom-like_a/b"/>
</dbReference>
<dbReference type="InterPro" id="IPR000238">
    <property type="entry name" value="RbfA"/>
</dbReference>
<dbReference type="InterPro" id="IPR023799">
    <property type="entry name" value="RbfA_dom_sf"/>
</dbReference>
<dbReference type="InterPro" id="IPR020053">
    <property type="entry name" value="Ribosome-bd_factorA_CS"/>
</dbReference>
<dbReference type="NCBIfam" id="TIGR00082">
    <property type="entry name" value="rbfA"/>
    <property type="match status" value="1"/>
</dbReference>
<dbReference type="PANTHER" id="PTHR33515">
    <property type="entry name" value="RIBOSOME-BINDING FACTOR A, CHLOROPLASTIC-RELATED"/>
    <property type="match status" value="1"/>
</dbReference>
<dbReference type="PANTHER" id="PTHR33515:SF1">
    <property type="entry name" value="RIBOSOME-BINDING FACTOR A, CHLOROPLASTIC-RELATED"/>
    <property type="match status" value="1"/>
</dbReference>
<dbReference type="Pfam" id="PF02033">
    <property type="entry name" value="RBFA"/>
    <property type="match status" value="1"/>
</dbReference>
<dbReference type="SUPFAM" id="SSF89919">
    <property type="entry name" value="Ribosome-binding factor A, RbfA"/>
    <property type="match status" value="1"/>
</dbReference>
<dbReference type="PROSITE" id="PS01319">
    <property type="entry name" value="RBFA"/>
    <property type="match status" value="1"/>
</dbReference>
<comment type="function">
    <text evidence="1">One of several proteins that assist in the late maturation steps of the functional core of the 30S ribosomal subunit. Associates with free 30S ribosomal subunits (but not with 30S subunits that are part of 70S ribosomes or polysomes). Required for efficient processing of 16S rRNA. May interact with the 5'-terminal helix region of 16S rRNA.</text>
</comment>
<comment type="subunit">
    <text evidence="1">Monomer. Binds 30S ribosomal subunits, but not 50S ribosomal subunits or 70S ribosomes.</text>
</comment>
<comment type="subcellular location">
    <subcellularLocation>
        <location evidence="1">Cytoplasm</location>
    </subcellularLocation>
</comment>
<comment type="similarity">
    <text evidence="1">Belongs to the RbfA family.</text>
</comment>
<protein>
    <recommendedName>
        <fullName evidence="1">Ribosome-binding factor A</fullName>
    </recommendedName>
</protein>
<sequence length="114" mass="12941">MNVRANRVSEQMKKELGDILNRKIKDPRLGFVTVTGVDVTGDLQEAKVFISILGTDKEKENTLLALAKAHGFIRSEIGRRIRLRKVPEMSFEIDNSIAYGNRIDELLRDLNSDQ</sequence>
<accession>A0AIC8</accession>